<feature type="chain" id="PRO_0000280562" description="Ubiquitin carboxyl-terminal hydrolase 45">
    <location>
        <begin position="1"/>
        <end position="813"/>
    </location>
</feature>
<feature type="domain" description="USP">
    <location>
        <begin position="191"/>
        <end position="812"/>
    </location>
</feature>
<feature type="zinc finger region" description="UBP-type" evidence="3">
    <location>
        <begin position="36"/>
        <end position="153"/>
    </location>
</feature>
<feature type="region of interest" description="Interaction with ERCC1" evidence="12">
    <location>
        <begin position="1"/>
        <end position="62"/>
    </location>
</feature>
<feature type="region of interest" description="Disordered" evidence="6">
    <location>
        <begin position="1"/>
        <end position="27"/>
    </location>
</feature>
<feature type="region of interest" description="Disordered" evidence="6">
    <location>
        <begin position="405"/>
        <end position="552"/>
    </location>
</feature>
<feature type="compositionally biased region" description="Basic and acidic residues" evidence="6">
    <location>
        <begin position="1"/>
        <end position="14"/>
    </location>
</feature>
<feature type="compositionally biased region" description="Basic and acidic residues" evidence="6">
    <location>
        <begin position="405"/>
        <end position="414"/>
    </location>
</feature>
<feature type="compositionally biased region" description="Basic and acidic residues" evidence="6">
    <location>
        <begin position="450"/>
        <end position="466"/>
    </location>
</feature>
<feature type="compositionally biased region" description="Polar residues" evidence="6">
    <location>
        <begin position="472"/>
        <end position="488"/>
    </location>
</feature>
<feature type="compositionally biased region" description="Basic and acidic residues" evidence="6">
    <location>
        <begin position="521"/>
        <end position="533"/>
    </location>
</feature>
<feature type="active site" description="Nucleophile" evidence="4 5">
    <location>
        <position position="200"/>
    </location>
</feature>
<feature type="active site" description="Proton acceptor" evidence="4 5">
    <location>
        <position position="745"/>
    </location>
</feature>
<feature type="binding site" evidence="3">
    <location>
        <position position="38"/>
    </location>
    <ligand>
        <name>Zn(2+)</name>
        <dbReference type="ChEBI" id="CHEBI:29105"/>
        <label>1</label>
    </ligand>
</feature>
<feature type="binding site" evidence="3">
    <location>
        <position position="40"/>
    </location>
    <ligand>
        <name>Zn(2+)</name>
        <dbReference type="ChEBI" id="CHEBI:29105"/>
        <label>1</label>
    </ligand>
</feature>
<feature type="binding site" evidence="3">
    <location>
        <position position="62"/>
    </location>
    <ligand>
        <name>Zn(2+)</name>
        <dbReference type="ChEBI" id="CHEBI:29105"/>
        <label>2</label>
    </ligand>
</feature>
<feature type="binding site" evidence="3">
    <location>
        <position position="65"/>
    </location>
    <ligand>
        <name>Zn(2+)</name>
        <dbReference type="ChEBI" id="CHEBI:29105"/>
        <label>2</label>
    </ligand>
</feature>
<feature type="binding site" evidence="3">
    <location>
        <position position="85"/>
    </location>
    <ligand>
        <name>Zn(2+)</name>
        <dbReference type="ChEBI" id="CHEBI:29105"/>
        <label>3</label>
    </ligand>
</feature>
<feature type="binding site" evidence="3">
    <location>
        <position position="88"/>
    </location>
    <ligand>
        <name>Zn(2+)</name>
        <dbReference type="ChEBI" id="CHEBI:29105"/>
        <label>3</label>
    </ligand>
</feature>
<feature type="binding site" evidence="3">
    <location>
        <position position="93"/>
    </location>
    <ligand>
        <name>Zn(2+)</name>
        <dbReference type="ChEBI" id="CHEBI:29105"/>
        <label>2</label>
    </ligand>
</feature>
<feature type="binding site" evidence="3">
    <location>
        <position position="101"/>
    </location>
    <ligand>
        <name>Zn(2+)</name>
        <dbReference type="ChEBI" id="CHEBI:29105"/>
        <label>2</label>
    </ligand>
</feature>
<feature type="binding site" evidence="3">
    <location>
        <position position="105"/>
    </location>
    <ligand>
        <name>Zn(2+)</name>
        <dbReference type="ChEBI" id="CHEBI:29105"/>
        <label>3</label>
    </ligand>
</feature>
<feature type="binding site" evidence="3">
    <location>
        <position position="114"/>
    </location>
    <ligand>
        <name>Zn(2+)</name>
        <dbReference type="ChEBI" id="CHEBI:29105"/>
        <label>3</label>
    </ligand>
</feature>
<feature type="binding site" evidence="3">
    <location>
        <position position="127"/>
    </location>
    <ligand>
        <name>Zn(2+)</name>
        <dbReference type="ChEBI" id="CHEBI:29105"/>
        <label>1</label>
    </ligand>
</feature>
<feature type="binding site" evidence="3">
    <location>
        <position position="130"/>
    </location>
    <ligand>
        <name>Zn(2+)</name>
        <dbReference type="ChEBI" id="CHEBI:29105"/>
        <label>1</label>
    </ligand>
</feature>
<feature type="modified residue" description="Phosphoserine" evidence="13">
    <location>
        <position position="28"/>
    </location>
</feature>
<feature type="modified residue" description="Phosphoserine" evidence="13">
    <location>
        <position position="29"/>
    </location>
</feature>
<feature type="modified residue" description="Phosphoserine" evidence="13">
    <location>
        <position position="507"/>
    </location>
</feature>
<feature type="modified residue" description="Phosphoserine" evidence="13">
    <location>
        <position position="525"/>
    </location>
</feature>
<feature type="splice variant" id="VSP_023794" description="In isoform 2." evidence="10">
    <location>
        <begin position="390"/>
        <end position="437"/>
    </location>
</feature>
<feature type="sequence conflict" description="In Ref. 1; BAC40129." evidence="11" ref="1">
    <original>R</original>
    <variation>G</variation>
    <location>
        <position position="595"/>
    </location>
</feature>
<protein>
    <recommendedName>
        <fullName>Ubiquitin carboxyl-terminal hydrolase 45</fullName>
        <ecNumber evidence="2">3.4.19.12</ecNumber>
    </recommendedName>
    <alternativeName>
        <fullName>Deubiquitinating enzyme 45</fullName>
    </alternativeName>
    <alternativeName>
        <fullName>Ubiquitin thioesterase 45</fullName>
    </alternativeName>
    <alternativeName>
        <fullName>Ubiquitin-specific-processing protease 45</fullName>
    </alternativeName>
</protein>
<keyword id="KW-0025">Alternative splicing</keyword>
<keyword id="KW-0963">Cytoplasm</keyword>
<keyword id="KW-0378">Hydrolase</keyword>
<keyword id="KW-0479">Metal-binding</keyword>
<keyword id="KW-0539">Nucleus</keyword>
<keyword id="KW-0597">Phosphoprotein</keyword>
<keyword id="KW-0645">Protease</keyword>
<keyword id="KW-1185">Reference proteome</keyword>
<keyword id="KW-0788">Thiol protease</keyword>
<keyword id="KW-0833">Ubl conjugation pathway</keyword>
<keyword id="KW-0862">Zinc</keyword>
<keyword id="KW-0863">Zinc-finger</keyword>
<dbReference type="EC" id="3.4.19.12" evidence="2"/>
<dbReference type="EMBL" id="AK036903">
    <property type="protein sequence ID" value="BAC29631.1"/>
    <property type="status" value="ALT_INIT"/>
    <property type="molecule type" value="mRNA"/>
</dbReference>
<dbReference type="EMBL" id="AK088073">
    <property type="protein sequence ID" value="BAC40129.1"/>
    <property type="molecule type" value="mRNA"/>
</dbReference>
<dbReference type="EMBL" id="AL772187">
    <property type="status" value="NOT_ANNOTATED_CDS"/>
    <property type="molecule type" value="Genomic_DNA"/>
</dbReference>
<dbReference type="EMBL" id="BC027768">
    <property type="protein sequence ID" value="AAH27768.1"/>
    <property type="molecule type" value="mRNA"/>
</dbReference>
<dbReference type="CCDS" id="CCDS38700.1">
    <molecule id="Q8K387-1"/>
</dbReference>
<dbReference type="CCDS" id="CCDS71351.1">
    <molecule id="Q8K387-2"/>
</dbReference>
<dbReference type="RefSeq" id="NP_001277354.1">
    <molecule id="Q8K387-2"/>
    <property type="nucleotide sequence ID" value="NM_001290425.1"/>
</dbReference>
<dbReference type="RefSeq" id="NP_690038.1">
    <molecule id="Q8K387-1"/>
    <property type="nucleotide sequence ID" value="NM_152825.2"/>
</dbReference>
<dbReference type="RefSeq" id="XP_006538424.1">
    <molecule id="Q8K387-1"/>
    <property type="nucleotide sequence ID" value="XM_006538361.5"/>
</dbReference>
<dbReference type="RefSeq" id="XP_011248434.1">
    <molecule id="Q8K387-1"/>
    <property type="nucleotide sequence ID" value="XM_011250132.1"/>
</dbReference>
<dbReference type="SMR" id="Q8K387"/>
<dbReference type="BioGRID" id="218782">
    <property type="interactions" value="7"/>
</dbReference>
<dbReference type="FunCoup" id="Q8K387">
    <property type="interactions" value="3583"/>
</dbReference>
<dbReference type="STRING" id="10090.ENSMUSP00000067109"/>
<dbReference type="MEROPS" id="C19.064"/>
<dbReference type="GlyGen" id="Q8K387">
    <property type="glycosylation" value="1 site, 1 O-linked glycan (1 site)"/>
</dbReference>
<dbReference type="iPTMnet" id="Q8K387"/>
<dbReference type="PhosphoSitePlus" id="Q8K387"/>
<dbReference type="PaxDb" id="10090-ENSMUSP00000067109"/>
<dbReference type="PeptideAtlas" id="Q8K387"/>
<dbReference type="ProteomicsDB" id="297707">
    <molecule id="Q8K387-1"/>
</dbReference>
<dbReference type="ProteomicsDB" id="297708">
    <molecule id="Q8K387-2"/>
</dbReference>
<dbReference type="Antibodypedia" id="32010">
    <property type="antibodies" value="175 antibodies from 25 providers"/>
</dbReference>
<dbReference type="DNASU" id="77593"/>
<dbReference type="Ensembl" id="ENSMUST00000040429.12">
    <molecule id="Q8K387-2"/>
    <property type="protein sequence ID" value="ENSMUSP00000048324.6"/>
    <property type="gene ID" value="ENSMUSG00000040455.18"/>
</dbReference>
<dbReference type="Ensembl" id="ENSMUST00000065111.15">
    <molecule id="Q8K387-1"/>
    <property type="protein sequence ID" value="ENSMUSP00000067109.9"/>
    <property type="gene ID" value="ENSMUSG00000040455.18"/>
</dbReference>
<dbReference type="Ensembl" id="ENSMUST00000108232.9">
    <molecule id="Q8K387-1"/>
    <property type="protein sequence ID" value="ENSMUSP00000103867.3"/>
    <property type="gene ID" value="ENSMUSG00000040455.18"/>
</dbReference>
<dbReference type="GeneID" id="77593"/>
<dbReference type="KEGG" id="mmu:77593"/>
<dbReference type="UCSC" id="uc008sda.1">
    <molecule id="Q8K387-1"/>
    <property type="organism name" value="mouse"/>
</dbReference>
<dbReference type="UCSC" id="uc008sdc.1">
    <molecule id="Q8K387-2"/>
    <property type="organism name" value="mouse"/>
</dbReference>
<dbReference type="AGR" id="MGI:101850"/>
<dbReference type="CTD" id="85015"/>
<dbReference type="MGI" id="MGI:101850">
    <property type="gene designation" value="Usp45"/>
</dbReference>
<dbReference type="VEuPathDB" id="HostDB:ENSMUSG00000040455"/>
<dbReference type="eggNOG" id="KOG1873">
    <property type="taxonomic scope" value="Eukaryota"/>
</dbReference>
<dbReference type="GeneTree" id="ENSGT00940000157719"/>
<dbReference type="HOGENOM" id="CLU_007938_1_0_1"/>
<dbReference type="InParanoid" id="Q8K387"/>
<dbReference type="OMA" id="AVGQWVY"/>
<dbReference type="OrthoDB" id="2020758at2759"/>
<dbReference type="PhylomeDB" id="Q8K387"/>
<dbReference type="TreeFam" id="TF326075"/>
<dbReference type="Reactome" id="R-MMU-5696395">
    <property type="pathway name" value="Formation of Incision Complex in GG-NER"/>
</dbReference>
<dbReference type="BioGRID-ORCS" id="77593">
    <property type="hits" value="2 hits in 113 CRISPR screens"/>
</dbReference>
<dbReference type="ChiTaRS" id="Usp45">
    <property type="organism name" value="mouse"/>
</dbReference>
<dbReference type="PRO" id="PR:Q8K387"/>
<dbReference type="Proteomes" id="UP000000589">
    <property type="component" value="Chromosome 4"/>
</dbReference>
<dbReference type="RNAct" id="Q8K387">
    <property type="molecule type" value="protein"/>
</dbReference>
<dbReference type="Bgee" id="ENSMUSG00000040455">
    <property type="expression patterns" value="Expressed in CA1 field of hippocampus and 253 other cell types or tissues"/>
</dbReference>
<dbReference type="ExpressionAtlas" id="Q8K387">
    <property type="expression patterns" value="baseline and differential"/>
</dbReference>
<dbReference type="GO" id="GO:0005737">
    <property type="term" value="C:cytoplasm"/>
    <property type="evidence" value="ECO:0000266"/>
    <property type="project" value="MGI"/>
</dbReference>
<dbReference type="GO" id="GO:0005829">
    <property type="term" value="C:cytosol"/>
    <property type="evidence" value="ECO:0007669"/>
    <property type="project" value="Ensembl"/>
</dbReference>
<dbReference type="GO" id="GO:0005654">
    <property type="term" value="C:nucleoplasm"/>
    <property type="evidence" value="ECO:0007669"/>
    <property type="project" value="Ensembl"/>
</dbReference>
<dbReference type="GO" id="GO:0005634">
    <property type="term" value="C:nucleus"/>
    <property type="evidence" value="ECO:0000266"/>
    <property type="project" value="MGI"/>
</dbReference>
<dbReference type="GO" id="GO:0001917">
    <property type="term" value="C:photoreceptor inner segment"/>
    <property type="evidence" value="ECO:0000250"/>
    <property type="project" value="UniProtKB"/>
</dbReference>
<dbReference type="GO" id="GO:0004843">
    <property type="term" value="F:cysteine-type deubiquitinase activity"/>
    <property type="evidence" value="ECO:0000250"/>
    <property type="project" value="UniProtKB"/>
</dbReference>
<dbReference type="GO" id="GO:0008270">
    <property type="term" value="F:zinc ion binding"/>
    <property type="evidence" value="ECO:0007669"/>
    <property type="project" value="UniProtKB-KW"/>
</dbReference>
<dbReference type="GO" id="GO:0016477">
    <property type="term" value="P:cell migration"/>
    <property type="evidence" value="ECO:0000250"/>
    <property type="project" value="UniProtKB"/>
</dbReference>
<dbReference type="GO" id="GO:0006281">
    <property type="term" value="P:DNA repair"/>
    <property type="evidence" value="ECO:0000266"/>
    <property type="project" value="MGI"/>
</dbReference>
<dbReference type="GO" id="GO:0003407">
    <property type="term" value="P:neural retina development"/>
    <property type="evidence" value="ECO:0000250"/>
    <property type="project" value="UniProtKB"/>
</dbReference>
<dbReference type="GO" id="GO:0045494">
    <property type="term" value="P:photoreceptor cell maintenance"/>
    <property type="evidence" value="ECO:0000315"/>
    <property type="project" value="UniProtKB"/>
</dbReference>
<dbReference type="GO" id="GO:0016579">
    <property type="term" value="P:protein deubiquitination"/>
    <property type="evidence" value="ECO:0000266"/>
    <property type="project" value="MGI"/>
</dbReference>
<dbReference type="GO" id="GO:0006508">
    <property type="term" value="P:proteolysis"/>
    <property type="evidence" value="ECO:0007669"/>
    <property type="project" value="UniProtKB-KW"/>
</dbReference>
<dbReference type="CDD" id="cd02667">
    <property type="entry name" value="Peptidase_C19K"/>
    <property type="match status" value="1"/>
</dbReference>
<dbReference type="FunFam" id="3.30.40.10:FF:000147">
    <property type="entry name" value="Ubiquitin carboxyl-terminal hydrolase 16"/>
    <property type="match status" value="1"/>
</dbReference>
<dbReference type="FunFam" id="3.90.70.10:FF:000129">
    <property type="entry name" value="Ubiquitinyl hydrolase 1"/>
    <property type="match status" value="1"/>
</dbReference>
<dbReference type="FunFam" id="3.90.70.10:FF:000404">
    <property type="entry name" value="Ubiquitinyl hydrolase 1"/>
    <property type="match status" value="1"/>
</dbReference>
<dbReference type="Gene3D" id="3.90.70.10">
    <property type="entry name" value="Cysteine proteinases"/>
    <property type="match status" value="2"/>
</dbReference>
<dbReference type="Gene3D" id="3.30.40.10">
    <property type="entry name" value="Zinc/RING finger domain, C3HC4 (zinc finger)"/>
    <property type="match status" value="1"/>
</dbReference>
<dbReference type="InterPro" id="IPR038765">
    <property type="entry name" value="Papain-like_cys_pep_sf"/>
</dbReference>
<dbReference type="InterPro" id="IPR001394">
    <property type="entry name" value="Peptidase_C19_UCH"/>
</dbReference>
<dbReference type="InterPro" id="IPR050185">
    <property type="entry name" value="Ub_carboxyl-term_hydrolase"/>
</dbReference>
<dbReference type="InterPro" id="IPR018200">
    <property type="entry name" value="USP_CS"/>
</dbReference>
<dbReference type="InterPro" id="IPR028889">
    <property type="entry name" value="USP_dom"/>
</dbReference>
<dbReference type="InterPro" id="IPR013083">
    <property type="entry name" value="Znf_RING/FYVE/PHD"/>
</dbReference>
<dbReference type="InterPro" id="IPR001607">
    <property type="entry name" value="Znf_UBP"/>
</dbReference>
<dbReference type="PANTHER" id="PTHR21646">
    <property type="entry name" value="UBIQUITIN CARBOXYL-TERMINAL HYDROLASE"/>
    <property type="match status" value="1"/>
</dbReference>
<dbReference type="PANTHER" id="PTHR21646:SF34">
    <property type="entry name" value="UBIQUITIN CARBOXYL-TERMINAL HYDROLASE 45"/>
    <property type="match status" value="1"/>
</dbReference>
<dbReference type="Pfam" id="PF00443">
    <property type="entry name" value="UCH"/>
    <property type="match status" value="1"/>
</dbReference>
<dbReference type="Pfam" id="PF02148">
    <property type="entry name" value="zf-UBP"/>
    <property type="match status" value="1"/>
</dbReference>
<dbReference type="SMART" id="SM00290">
    <property type="entry name" value="ZnF_UBP"/>
    <property type="match status" value="1"/>
</dbReference>
<dbReference type="SUPFAM" id="SSF54001">
    <property type="entry name" value="Cysteine proteinases"/>
    <property type="match status" value="1"/>
</dbReference>
<dbReference type="SUPFAM" id="SSF57850">
    <property type="entry name" value="RING/U-box"/>
    <property type="match status" value="1"/>
</dbReference>
<dbReference type="PROSITE" id="PS00972">
    <property type="entry name" value="USP_1"/>
    <property type="match status" value="1"/>
</dbReference>
<dbReference type="PROSITE" id="PS00973">
    <property type="entry name" value="USP_2"/>
    <property type="match status" value="1"/>
</dbReference>
<dbReference type="PROSITE" id="PS50235">
    <property type="entry name" value="USP_3"/>
    <property type="match status" value="1"/>
</dbReference>
<dbReference type="PROSITE" id="PS50271">
    <property type="entry name" value="ZF_UBP"/>
    <property type="match status" value="1"/>
</dbReference>
<sequence>MRVKDPSKDLPEKGKRNKRPLLPHDEDSSDDIAVGLTCQHVSYAVSVNHVKKAVAESLWSVCSECLKERRFCDGQPVLPADVWLCLKCGLQGCGKNSESQHSLRHFKSSGTESHCVVISLSTWVIWCYECNEKLSTHCNKKVLAQIVDFLQKHAFKTQTGAFSRIIKLCEEKREAGEIKKGKKGCTVPSVKGITNLGNTCFFNAVIQNLAQTYILFELMNEIKEDGTKFKISLSSAPQLEPLVVELSSPGPLTSALFLFLHSMKEAEKGPLSPKVLFNQLCQKAPRFKGFQQQDSQELLHHLLDAVRTEETKRIQASILKAFNNPTTKTADDETRKKVKAYGKEGVKMNFIDRIFIGELTSTVMCEECANISTMKDPFIDISLPIIEERVSKPVLLGKMSKCRSLQETDQDHNKGTVTVGNAHQPRASRKHSSPNDKNQLSHDRKHLRKWPSEEEKTVVTHPKNDNLEASPPASTLSTEASLNESLTDGSERDASLESSVDADSEASEPEIASKQPVLLRSRGDSCGHAEQHPHLPLASELPQAKETHGGEEEMAEAIAELHLSGTVTGNRDFHREKQPLNVPNNLCFSEGKHTRLHSAQNAFQTLSQSYVTTSKECSVQSCLYQFTSMELLMGNNKLLCEDCTEKRRKCHKETSSAEKKAGGVYTNARKQLLISAVPAILILHLKRFHQAGLSLRKVNRHVDFPLTLDLAPFCAATCKNISVGEKVLYGLYGIVEHSGSMRGGHYTAYVKVRVPSRKLSECITGRKTAAGLKEPDGELGGHWVHVSDTYVQVVPESRALSAQAYLLFYERIL</sequence>
<reference key="1">
    <citation type="journal article" date="2005" name="Science">
        <title>The transcriptional landscape of the mammalian genome.</title>
        <authorList>
            <person name="Carninci P."/>
            <person name="Kasukawa T."/>
            <person name="Katayama S."/>
            <person name="Gough J."/>
            <person name="Frith M.C."/>
            <person name="Maeda N."/>
            <person name="Oyama R."/>
            <person name="Ravasi T."/>
            <person name="Lenhard B."/>
            <person name="Wells C."/>
            <person name="Kodzius R."/>
            <person name="Shimokawa K."/>
            <person name="Bajic V.B."/>
            <person name="Brenner S.E."/>
            <person name="Batalov S."/>
            <person name="Forrest A.R."/>
            <person name="Zavolan M."/>
            <person name="Davis M.J."/>
            <person name="Wilming L.G."/>
            <person name="Aidinis V."/>
            <person name="Allen J.E."/>
            <person name="Ambesi-Impiombato A."/>
            <person name="Apweiler R."/>
            <person name="Aturaliya R.N."/>
            <person name="Bailey T.L."/>
            <person name="Bansal M."/>
            <person name="Baxter L."/>
            <person name="Beisel K.W."/>
            <person name="Bersano T."/>
            <person name="Bono H."/>
            <person name="Chalk A.M."/>
            <person name="Chiu K.P."/>
            <person name="Choudhary V."/>
            <person name="Christoffels A."/>
            <person name="Clutterbuck D.R."/>
            <person name="Crowe M.L."/>
            <person name="Dalla E."/>
            <person name="Dalrymple B.P."/>
            <person name="de Bono B."/>
            <person name="Della Gatta G."/>
            <person name="di Bernardo D."/>
            <person name="Down T."/>
            <person name="Engstrom P."/>
            <person name="Fagiolini M."/>
            <person name="Faulkner G."/>
            <person name="Fletcher C.F."/>
            <person name="Fukushima T."/>
            <person name="Furuno M."/>
            <person name="Futaki S."/>
            <person name="Gariboldi M."/>
            <person name="Georgii-Hemming P."/>
            <person name="Gingeras T.R."/>
            <person name="Gojobori T."/>
            <person name="Green R.E."/>
            <person name="Gustincich S."/>
            <person name="Harbers M."/>
            <person name="Hayashi Y."/>
            <person name="Hensch T.K."/>
            <person name="Hirokawa N."/>
            <person name="Hill D."/>
            <person name="Huminiecki L."/>
            <person name="Iacono M."/>
            <person name="Ikeo K."/>
            <person name="Iwama A."/>
            <person name="Ishikawa T."/>
            <person name="Jakt M."/>
            <person name="Kanapin A."/>
            <person name="Katoh M."/>
            <person name="Kawasawa Y."/>
            <person name="Kelso J."/>
            <person name="Kitamura H."/>
            <person name="Kitano H."/>
            <person name="Kollias G."/>
            <person name="Krishnan S.P."/>
            <person name="Kruger A."/>
            <person name="Kummerfeld S.K."/>
            <person name="Kurochkin I.V."/>
            <person name="Lareau L.F."/>
            <person name="Lazarevic D."/>
            <person name="Lipovich L."/>
            <person name="Liu J."/>
            <person name="Liuni S."/>
            <person name="McWilliam S."/>
            <person name="Madan Babu M."/>
            <person name="Madera M."/>
            <person name="Marchionni L."/>
            <person name="Matsuda H."/>
            <person name="Matsuzawa S."/>
            <person name="Miki H."/>
            <person name="Mignone F."/>
            <person name="Miyake S."/>
            <person name="Morris K."/>
            <person name="Mottagui-Tabar S."/>
            <person name="Mulder N."/>
            <person name="Nakano N."/>
            <person name="Nakauchi H."/>
            <person name="Ng P."/>
            <person name="Nilsson R."/>
            <person name="Nishiguchi S."/>
            <person name="Nishikawa S."/>
            <person name="Nori F."/>
            <person name="Ohara O."/>
            <person name="Okazaki Y."/>
            <person name="Orlando V."/>
            <person name="Pang K.C."/>
            <person name="Pavan W.J."/>
            <person name="Pavesi G."/>
            <person name="Pesole G."/>
            <person name="Petrovsky N."/>
            <person name="Piazza S."/>
            <person name="Reed J."/>
            <person name="Reid J.F."/>
            <person name="Ring B.Z."/>
            <person name="Ringwald M."/>
            <person name="Rost B."/>
            <person name="Ruan Y."/>
            <person name="Salzberg S.L."/>
            <person name="Sandelin A."/>
            <person name="Schneider C."/>
            <person name="Schoenbach C."/>
            <person name="Sekiguchi K."/>
            <person name="Semple C.A."/>
            <person name="Seno S."/>
            <person name="Sessa L."/>
            <person name="Sheng Y."/>
            <person name="Shibata Y."/>
            <person name="Shimada H."/>
            <person name="Shimada K."/>
            <person name="Silva D."/>
            <person name="Sinclair B."/>
            <person name="Sperling S."/>
            <person name="Stupka E."/>
            <person name="Sugiura K."/>
            <person name="Sultana R."/>
            <person name="Takenaka Y."/>
            <person name="Taki K."/>
            <person name="Tammoja K."/>
            <person name="Tan S.L."/>
            <person name="Tang S."/>
            <person name="Taylor M.S."/>
            <person name="Tegner J."/>
            <person name="Teichmann S.A."/>
            <person name="Ueda H.R."/>
            <person name="van Nimwegen E."/>
            <person name="Verardo R."/>
            <person name="Wei C.L."/>
            <person name="Yagi K."/>
            <person name="Yamanishi H."/>
            <person name="Zabarovsky E."/>
            <person name="Zhu S."/>
            <person name="Zimmer A."/>
            <person name="Hide W."/>
            <person name="Bult C."/>
            <person name="Grimmond S.M."/>
            <person name="Teasdale R.D."/>
            <person name="Liu E.T."/>
            <person name="Brusic V."/>
            <person name="Quackenbush J."/>
            <person name="Wahlestedt C."/>
            <person name="Mattick J.S."/>
            <person name="Hume D.A."/>
            <person name="Kai C."/>
            <person name="Sasaki D."/>
            <person name="Tomaru Y."/>
            <person name="Fukuda S."/>
            <person name="Kanamori-Katayama M."/>
            <person name="Suzuki M."/>
            <person name="Aoki J."/>
            <person name="Arakawa T."/>
            <person name="Iida J."/>
            <person name="Imamura K."/>
            <person name="Itoh M."/>
            <person name="Kato T."/>
            <person name="Kawaji H."/>
            <person name="Kawagashira N."/>
            <person name="Kawashima T."/>
            <person name="Kojima M."/>
            <person name="Kondo S."/>
            <person name="Konno H."/>
            <person name="Nakano K."/>
            <person name="Ninomiya N."/>
            <person name="Nishio T."/>
            <person name="Okada M."/>
            <person name="Plessy C."/>
            <person name="Shibata K."/>
            <person name="Shiraki T."/>
            <person name="Suzuki S."/>
            <person name="Tagami M."/>
            <person name="Waki K."/>
            <person name="Watahiki A."/>
            <person name="Okamura-Oho Y."/>
            <person name="Suzuki H."/>
            <person name="Kawai J."/>
            <person name="Hayashizaki Y."/>
        </authorList>
    </citation>
    <scope>NUCLEOTIDE SEQUENCE [LARGE SCALE MRNA] (ISOFORM 2)</scope>
    <source>
        <strain>C57BL/6J</strain>
        <strain>NOD</strain>
        <tissue>Thymus</tissue>
        <tissue>Vagina</tissue>
    </source>
</reference>
<reference key="2">
    <citation type="journal article" date="2009" name="PLoS Biol.">
        <title>Lineage-specific biology revealed by a finished genome assembly of the mouse.</title>
        <authorList>
            <person name="Church D.M."/>
            <person name="Goodstadt L."/>
            <person name="Hillier L.W."/>
            <person name="Zody M.C."/>
            <person name="Goldstein S."/>
            <person name="She X."/>
            <person name="Bult C.J."/>
            <person name="Agarwala R."/>
            <person name="Cherry J.L."/>
            <person name="DiCuccio M."/>
            <person name="Hlavina W."/>
            <person name="Kapustin Y."/>
            <person name="Meric P."/>
            <person name="Maglott D."/>
            <person name="Birtle Z."/>
            <person name="Marques A.C."/>
            <person name="Graves T."/>
            <person name="Zhou S."/>
            <person name="Teague B."/>
            <person name="Potamousis K."/>
            <person name="Churas C."/>
            <person name="Place M."/>
            <person name="Herschleb J."/>
            <person name="Runnheim R."/>
            <person name="Forrest D."/>
            <person name="Amos-Landgraf J."/>
            <person name="Schwartz D.C."/>
            <person name="Cheng Z."/>
            <person name="Lindblad-Toh K."/>
            <person name="Eichler E.E."/>
            <person name="Ponting C.P."/>
        </authorList>
    </citation>
    <scope>NUCLEOTIDE SEQUENCE [LARGE SCALE GENOMIC DNA]</scope>
    <source>
        <strain>C57BL/6J</strain>
    </source>
</reference>
<reference key="3">
    <citation type="journal article" date="2004" name="Genome Res.">
        <title>The status, quality, and expansion of the NIH full-length cDNA project: the Mammalian Gene Collection (MGC).</title>
        <authorList>
            <consortium name="The MGC Project Team"/>
        </authorList>
    </citation>
    <scope>NUCLEOTIDE SEQUENCE [LARGE SCALE MRNA] (ISOFORM 1)</scope>
    <source>
        <strain>FVB/N</strain>
        <tissue>Mammary tumor</tissue>
    </source>
</reference>
<reference key="4">
    <citation type="journal article" date="2010" name="Cell">
        <title>A tissue-specific atlas of mouse protein phosphorylation and expression.</title>
        <authorList>
            <person name="Huttlin E.L."/>
            <person name="Jedrychowski M.P."/>
            <person name="Elias J.E."/>
            <person name="Goswami T."/>
            <person name="Rad R."/>
            <person name="Beausoleil S.A."/>
            <person name="Villen J."/>
            <person name="Haas W."/>
            <person name="Sowa M.E."/>
            <person name="Gygi S.P."/>
        </authorList>
    </citation>
    <scope>PHOSPHORYLATION [LARGE SCALE ANALYSIS] AT SER-28; SER-29; SER-507 AND SER-525</scope>
    <scope>IDENTIFICATION BY MASS SPECTROMETRY [LARGE SCALE ANALYSIS]</scope>
    <source>
        <tissue>Spleen</tissue>
    </source>
</reference>
<reference key="5">
    <citation type="journal article" date="2015" name="EMBO J.">
        <title>USP45 deubiquitylase controls ERCC1-XPF endonuclease-mediated DNA damage responses.</title>
        <authorList>
            <person name="Perez-Oliva A.B."/>
            <person name="Lachaud C."/>
            <person name="Szyniarowski P."/>
            <person name="Munoz I."/>
            <person name="Macartney T."/>
            <person name="Hickson I."/>
            <person name="Rouse J."/>
            <person name="Alessi D.R."/>
        </authorList>
    </citation>
    <scope>INTERACTION WITH ERCC1</scope>
</reference>
<reference key="6">
    <citation type="journal article" date="2016" name="Methods Mol. Biol.">
        <title>Combining Zebrafish and Mouse Models to Test the Function of Deubiquitinating Enzyme (Dubs) Genes in Development: Role of USP45 in the Retina.</title>
        <authorList>
            <person name="Toulis V."/>
            <person name="Garanto A."/>
            <person name="Marfany G."/>
        </authorList>
    </citation>
    <scope>TISSUE SPECIFICITY</scope>
</reference>
<reference key="7">
    <citation type="journal article" date="2019" name="J. Med. Genet.">
        <title>Biallelic mutations in USP45, encoding a deubiquitinating enzyme, are associated with Leber congenital amaurosis.</title>
        <authorList>
            <person name="Yi Z."/>
            <person name="Ouyang J."/>
            <person name="Sun W."/>
            <person name="Xiao X."/>
            <person name="Li S."/>
            <person name="Jia X."/>
            <person name="Wang P."/>
            <person name="Zhang Q."/>
        </authorList>
    </citation>
    <scope>FUNCTION</scope>
    <scope>DISRUPTION PHENOTYPE</scope>
</reference>
<comment type="function">
    <text evidence="1 2 9">Catalyzes the deubiquitination of SPDL1 (By similarity). Plays a role in the repair of UV-induced DNA damage via deubiquitination of ERCC1, promoting its recruitment to DNA damage sites (By similarity). May be involved in the maintenance of photoreceptor function (PubMed:30573563). May play a role in normal retinal development (By similarity). Plays a role in cell migration (By similarity).</text>
</comment>
<comment type="catalytic activity">
    <reaction evidence="2">
        <text>Thiol-dependent hydrolysis of ester, thioester, amide, peptide and isopeptide bonds formed by the C-terminal Gly of ubiquitin (a 76-residue protein attached to proteins as an intracellular targeting signal).</text>
        <dbReference type="EC" id="3.4.19.12"/>
    </reaction>
</comment>
<comment type="subunit">
    <text evidence="2 7">Interacts with ERCC1 (PubMed:25538220). The catalytically active form interacts with SPDL1 (By similarity).</text>
</comment>
<comment type="subcellular location">
    <subcellularLocation>
        <location evidence="2">Photoreceptor inner segment</location>
    </subcellularLocation>
    <subcellularLocation>
        <location evidence="2">Cytoplasm</location>
    </subcellularLocation>
    <subcellularLocation>
        <location evidence="2">Nucleus</location>
    </subcellularLocation>
</comment>
<comment type="alternative products">
    <event type="alternative splicing"/>
    <isoform>
        <id>Q8K387-1</id>
        <name>1</name>
        <sequence type="displayed"/>
    </isoform>
    <isoform>
        <id>Q8K387-2</id>
        <name>2</name>
        <sequence type="described" ref="VSP_023794"/>
    </isoform>
</comment>
<comment type="tissue specificity">
    <text evidence="8">Retina.</text>
</comment>
<comment type="disruption phenotype">
    <text evidence="9">Mutant mice generated by CRISPR-Cas9-mediated gene editing show severely reduced scotopic and photopic responses and have significantly fewer green cone photoreceptors compared to wild-type animals.</text>
</comment>
<comment type="miscellaneous">
    <molecule>Isoform 1</molecule>
    <text>May be produced at very low levels due to a premature stop codon in the mRNA, leading to nonsense-mediated mRNA decay.</text>
</comment>
<comment type="similarity">
    <text evidence="11">Belongs to the peptidase C19 family.</text>
</comment>
<comment type="sequence caution" evidence="11">
    <conflict type="erroneous initiation">
        <sequence resource="EMBL-CDS" id="BAC29631"/>
    </conflict>
</comment>
<proteinExistence type="evidence at protein level"/>
<gene>
    <name type="primary">Usp45</name>
</gene>
<organism>
    <name type="scientific">Mus musculus</name>
    <name type="common">Mouse</name>
    <dbReference type="NCBI Taxonomy" id="10090"/>
    <lineage>
        <taxon>Eukaryota</taxon>
        <taxon>Metazoa</taxon>
        <taxon>Chordata</taxon>
        <taxon>Craniata</taxon>
        <taxon>Vertebrata</taxon>
        <taxon>Euteleostomi</taxon>
        <taxon>Mammalia</taxon>
        <taxon>Eutheria</taxon>
        <taxon>Euarchontoglires</taxon>
        <taxon>Glires</taxon>
        <taxon>Rodentia</taxon>
        <taxon>Myomorpha</taxon>
        <taxon>Muroidea</taxon>
        <taxon>Muridae</taxon>
        <taxon>Murinae</taxon>
        <taxon>Mus</taxon>
        <taxon>Mus</taxon>
    </lineage>
</organism>
<evidence type="ECO:0000250" key="1">
    <source>
        <dbReference type="UniProtKB" id="E9QG68"/>
    </source>
</evidence>
<evidence type="ECO:0000250" key="2">
    <source>
        <dbReference type="UniProtKB" id="Q70EL2"/>
    </source>
</evidence>
<evidence type="ECO:0000255" key="3">
    <source>
        <dbReference type="PROSITE-ProRule" id="PRU00502"/>
    </source>
</evidence>
<evidence type="ECO:0000255" key="4">
    <source>
        <dbReference type="PROSITE-ProRule" id="PRU10092"/>
    </source>
</evidence>
<evidence type="ECO:0000255" key="5">
    <source>
        <dbReference type="PROSITE-ProRule" id="PRU10093"/>
    </source>
</evidence>
<evidence type="ECO:0000256" key="6">
    <source>
        <dbReference type="SAM" id="MobiDB-lite"/>
    </source>
</evidence>
<evidence type="ECO:0000269" key="7">
    <source>
    </source>
</evidence>
<evidence type="ECO:0000269" key="8">
    <source>
    </source>
</evidence>
<evidence type="ECO:0000269" key="9">
    <source>
    </source>
</evidence>
<evidence type="ECO:0000303" key="10">
    <source>
    </source>
</evidence>
<evidence type="ECO:0000305" key="11"/>
<evidence type="ECO:0000305" key="12">
    <source>
    </source>
</evidence>
<evidence type="ECO:0007744" key="13">
    <source>
    </source>
</evidence>
<accession>Q8K387</accession>
<accession>A2AJT1</accession>
<accession>Q8BU19</accession>
<accession>Q8BZ19</accession>
<name>UBP45_MOUSE</name>